<feature type="chain" id="PRO_0000057246" description="Deoxyribose-phosphate aldolase">
    <location>
        <begin position="1"/>
        <end position="220"/>
    </location>
</feature>
<feature type="active site" description="Proton donor/acceptor" evidence="1">
    <location>
        <position position="89"/>
    </location>
</feature>
<feature type="active site" description="Schiff-base intermediate with acetaldehyde" evidence="1">
    <location>
        <position position="151"/>
    </location>
</feature>
<feature type="active site" description="Proton donor/acceptor" evidence="1">
    <location>
        <position position="180"/>
    </location>
</feature>
<dbReference type="EC" id="4.1.2.4" evidence="1"/>
<dbReference type="EMBL" id="AL445564">
    <property type="protein sequence ID" value="CAC13487.1"/>
    <property type="status" value="ALT_INIT"/>
    <property type="molecule type" value="Genomic_DNA"/>
</dbReference>
<dbReference type="PIR" id="B90551">
    <property type="entry name" value="B90551"/>
</dbReference>
<dbReference type="RefSeq" id="WP_041364028.1">
    <property type="nucleotide sequence ID" value="NC_002771.1"/>
</dbReference>
<dbReference type="SMR" id="Q98QP7"/>
<dbReference type="STRING" id="272635.gene:17576905"/>
<dbReference type="KEGG" id="mpu:MYPU_3140"/>
<dbReference type="eggNOG" id="COG0274">
    <property type="taxonomic scope" value="Bacteria"/>
</dbReference>
<dbReference type="HOGENOM" id="CLU_053595_0_1_14"/>
<dbReference type="BioCyc" id="MPUL272635:G1GT6-315-MONOMER"/>
<dbReference type="UniPathway" id="UPA00002">
    <property type="reaction ID" value="UER00468"/>
</dbReference>
<dbReference type="Proteomes" id="UP000000528">
    <property type="component" value="Chromosome"/>
</dbReference>
<dbReference type="GO" id="GO:0005737">
    <property type="term" value="C:cytoplasm"/>
    <property type="evidence" value="ECO:0007669"/>
    <property type="project" value="UniProtKB-SubCell"/>
</dbReference>
<dbReference type="GO" id="GO:0004139">
    <property type="term" value="F:deoxyribose-phosphate aldolase activity"/>
    <property type="evidence" value="ECO:0007669"/>
    <property type="project" value="UniProtKB-UniRule"/>
</dbReference>
<dbReference type="GO" id="GO:0006018">
    <property type="term" value="P:2-deoxyribose 1-phosphate catabolic process"/>
    <property type="evidence" value="ECO:0007669"/>
    <property type="project" value="UniProtKB-UniRule"/>
</dbReference>
<dbReference type="GO" id="GO:0016052">
    <property type="term" value="P:carbohydrate catabolic process"/>
    <property type="evidence" value="ECO:0007669"/>
    <property type="project" value="TreeGrafter"/>
</dbReference>
<dbReference type="GO" id="GO:0009264">
    <property type="term" value="P:deoxyribonucleotide catabolic process"/>
    <property type="evidence" value="ECO:0007669"/>
    <property type="project" value="InterPro"/>
</dbReference>
<dbReference type="CDD" id="cd00959">
    <property type="entry name" value="DeoC"/>
    <property type="match status" value="1"/>
</dbReference>
<dbReference type="FunFam" id="3.20.20.70:FF:000044">
    <property type="entry name" value="Deoxyribose-phosphate aldolase"/>
    <property type="match status" value="1"/>
</dbReference>
<dbReference type="Gene3D" id="3.20.20.70">
    <property type="entry name" value="Aldolase class I"/>
    <property type="match status" value="1"/>
</dbReference>
<dbReference type="HAMAP" id="MF_00114">
    <property type="entry name" value="DeoC_type1"/>
    <property type="match status" value="1"/>
</dbReference>
<dbReference type="InterPro" id="IPR013785">
    <property type="entry name" value="Aldolase_TIM"/>
</dbReference>
<dbReference type="InterPro" id="IPR011343">
    <property type="entry name" value="DeoC"/>
</dbReference>
<dbReference type="InterPro" id="IPR002915">
    <property type="entry name" value="DeoC/FbaB/LacD_aldolase"/>
</dbReference>
<dbReference type="InterPro" id="IPR028581">
    <property type="entry name" value="DeoC_typeI"/>
</dbReference>
<dbReference type="NCBIfam" id="TIGR00126">
    <property type="entry name" value="deoC"/>
    <property type="match status" value="1"/>
</dbReference>
<dbReference type="PANTHER" id="PTHR10889">
    <property type="entry name" value="DEOXYRIBOSE-PHOSPHATE ALDOLASE"/>
    <property type="match status" value="1"/>
</dbReference>
<dbReference type="PANTHER" id="PTHR10889:SF1">
    <property type="entry name" value="DEOXYRIBOSE-PHOSPHATE ALDOLASE"/>
    <property type="match status" value="1"/>
</dbReference>
<dbReference type="Pfam" id="PF01791">
    <property type="entry name" value="DeoC"/>
    <property type="match status" value="1"/>
</dbReference>
<dbReference type="PIRSF" id="PIRSF001357">
    <property type="entry name" value="DeoC"/>
    <property type="match status" value="1"/>
</dbReference>
<dbReference type="SMART" id="SM01133">
    <property type="entry name" value="DeoC"/>
    <property type="match status" value="1"/>
</dbReference>
<dbReference type="SUPFAM" id="SSF51569">
    <property type="entry name" value="Aldolase"/>
    <property type="match status" value="1"/>
</dbReference>
<organism>
    <name type="scientific">Mycoplasmopsis pulmonis (strain UAB CTIP)</name>
    <name type="common">Mycoplasma pulmonis</name>
    <dbReference type="NCBI Taxonomy" id="272635"/>
    <lineage>
        <taxon>Bacteria</taxon>
        <taxon>Bacillati</taxon>
        <taxon>Mycoplasmatota</taxon>
        <taxon>Mycoplasmoidales</taxon>
        <taxon>Metamycoplasmataceae</taxon>
        <taxon>Mycoplasmopsis</taxon>
    </lineage>
</organism>
<proteinExistence type="inferred from homology"/>
<sequence length="220" mass="24325">MELNKYIDHTLLKPEAKSKDIDKLIDEAKKYNFKAICINSSWVKYAKEKLKDSDIKIASVIDFPFGAAITQAKVQEAKLAISHGASEIDMVMNIGKFKDGDYEYVLNDIKSVKKVMGSNILKVIIETALLNEKEIIKACQIVLNSGAEFVKTSTGYSYRGASESDIEIMKKTVGDKVLIKASGGIKNQESLKKMIELGSSRIGTSSSVALMENQEIKKGY</sequence>
<comment type="function">
    <text evidence="1">Catalyzes a reversible aldol reaction between acetaldehyde and D-glyceraldehyde 3-phosphate to generate 2-deoxy-D-ribose 5-phosphate.</text>
</comment>
<comment type="catalytic activity">
    <reaction evidence="1">
        <text>2-deoxy-D-ribose 5-phosphate = D-glyceraldehyde 3-phosphate + acetaldehyde</text>
        <dbReference type="Rhea" id="RHEA:12821"/>
        <dbReference type="ChEBI" id="CHEBI:15343"/>
        <dbReference type="ChEBI" id="CHEBI:59776"/>
        <dbReference type="ChEBI" id="CHEBI:62877"/>
        <dbReference type="EC" id="4.1.2.4"/>
    </reaction>
</comment>
<comment type="pathway">
    <text evidence="1">Carbohydrate degradation; 2-deoxy-D-ribose 1-phosphate degradation; D-glyceraldehyde 3-phosphate and acetaldehyde from 2-deoxy-alpha-D-ribose 1-phosphate: step 2/2.</text>
</comment>
<comment type="subcellular location">
    <subcellularLocation>
        <location evidence="1">Cytoplasm</location>
    </subcellularLocation>
</comment>
<comment type="similarity">
    <text evidence="1">Belongs to the DeoC/FbaB aldolase family. DeoC type 1 subfamily.</text>
</comment>
<comment type="sequence caution" evidence="2">
    <conflict type="erroneous initiation">
        <sequence resource="EMBL-CDS" id="CAC13487"/>
    </conflict>
</comment>
<accession>Q98QP7</accession>
<evidence type="ECO:0000255" key="1">
    <source>
        <dbReference type="HAMAP-Rule" id="MF_00114"/>
    </source>
</evidence>
<evidence type="ECO:0000305" key="2"/>
<keyword id="KW-0963">Cytoplasm</keyword>
<keyword id="KW-0456">Lyase</keyword>
<keyword id="KW-1185">Reference proteome</keyword>
<keyword id="KW-0704">Schiff base</keyword>
<name>DEOC_MYCPU</name>
<reference key="1">
    <citation type="journal article" date="2001" name="Nucleic Acids Res.">
        <title>The complete genome sequence of the murine respiratory pathogen Mycoplasma pulmonis.</title>
        <authorList>
            <person name="Chambaud I."/>
            <person name="Heilig R."/>
            <person name="Ferris S."/>
            <person name="Barbe V."/>
            <person name="Samson D."/>
            <person name="Galisson F."/>
            <person name="Moszer I."/>
            <person name="Dybvig K."/>
            <person name="Wroblewski H."/>
            <person name="Viari A."/>
            <person name="Rocha E.P.C."/>
            <person name="Blanchard A."/>
        </authorList>
    </citation>
    <scope>NUCLEOTIDE SEQUENCE [LARGE SCALE GENOMIC DNA]</scope>
    <source>
        <strain>UAB CTIP</strain>
    </source>
</reference>
<protein>
    <recommendedName>
        <fullName evidence="1">Deoxyribose-phosphate aldolase</fullName>
        <shortName evidence="1">DERA</shortName>
        <ecNumber evidence="1">4.1.2.4</ecNumber>
    </recommendedName>
    <alternativeName>
        <fullName evidence="1">2-deoxy-D-ribose 5-phosphate aldolase</fullName>
    </alternativeName>
    <alternativeName>
        <fullName evidence="1">Phosphodeoxyriboaldolase</fullName>
        <shortName evidence="1">Deoxyriboaldolase</shortName>
    </alternativeName>
</protein>
<gene>
    <name evidence="1" type="primary">deoC</name>
    <name type="ordered locus">MYPU_3140</name>
</gene>